<sequence>MMPFSVLQVKRLQLELITPAKPTLQETKFLSDIDDQEGLRFQVPVIMCYKDNPSLNKNCNPVKVIREALSRALVYYYPLAGRLKEGPNRKLMVDCNGEGILFVEASADVTLEQLGDKILPPCPLLEEFLFNFPGSDGIIGCPLLLVQVTCLTCGGFILALRVNHTMCDAPGLLLFLTAIAEMARGAHAPSILPVWERELLFSRDPPRITCVHHEYEDVIDHSDGSYASSNQSNMVQRSFYFGAKEMRVLRKQIPPHVISTCSTFDLITACLSKCRTLALKINPKQAVRVSCVVNARGKHHNVRLPLRYYGNAFAFPTAVSKAEPLCKNPLGYALELVKKAKATMNEEYLRSVADLLVLRGRPQYSSTGSYLIVSDNTRAGFGDVNFGWGQPVFAGPAKALDLISFYVQHKNNTEDGILVPMCLPSSAMERFQQELERITQEPKEDICNNLRSTRIMSMM</sequence>
<comment type="function">
    <text evidence="1">Involved in the biosynthesis of volatile esters which confer ripe apple fruit flavor (By similarity). Alcohol acyl transferase that can use a wide range of alcohols as substrate to produce esters (By similarity).</text>
</comment>
<comment type="tissue specificity">
    <text evidence="3">Expressed at very low levels in the skin of ripe fruit.</text>
</comment>
<comment type="developmental stage">
    <text evidence="3">Accumulates progressively at very low levels during fruit development.</text>
</comment>
<comment type="miscellaneous">
    <text evidence="6">The fruit of cv. Royal Gala exhibits a high ester accumulation, whereas the cv. Granny Smith contains low ester levels; this influences strongly the ripe apple fruit aroma.</text>
</comment>
<comment type="similarity">
    <text evidence="5">Belongs to the plant acyltransferase family.</text>
</comment>
<proteinExistence type="evidence at transcript level"/>
<evidence type="ECO:0000250" key="1">
    <source>
        <dbReference type="UniProtKB" id="Q64FJ6"/>
    </source>
</evidence>
<evidence type="ECO:0000250" key="2">
    <source>
        <dbReference type="UniProtKB" id="Q9FI78"/>
    </source>
</evidence>
<evidence type="ECO:0000269" key="3">
    <source>
    </source>
</evidence>
<evidence type="ECO:0000303" key="4">
    <source>
    </source>
</evidence>
<evidence type="ECO:0000305" key="5"/>
<evidence type="ECO:0000305" key="6">
    <source>
    </source>
</evidence>
<evidence type="ECO:0000312" key="7">
    <source>
        <dbReference type="EMBL" id="RXI05631.1"/>
    </source>
</evidence>
<dbReference type="EC" id="2.3.1.-" evidence="1"/>
<dbReference type="EMBL" id="RDQH01000328">
    <property type="protein sequence ID" value="RXI05631.1"/>
    <property type="molecule type" value="Genomic_DNA"/>
</dbReference>
<dbReference type="EMBL" id="KC291131">
    <property type="protein sequence ID" value="AGW30202.1"/>
    <property type="molecule type" value="Genomic_DNA"/>
</dbReference>
<dbReference type="SMR" id="A0A498KE69"/>
<dbReference type="STRING" id="3750.A0A498KE69"/>
<dbReference type="Proteomes" id="UP000290289">
    <property type="component" value="Chromosome 2"/>
</dbReference>
<dbReference type="GO" id="GO:0016746">
    <property type="term" value="F:acyltransferase activity"/>
    <property type="evidence" value="ECO:0000250"/>
    <property type="project" value="UniProtKB"/>
</dbReference>
<dbReference type="GO" id="GO:0006066">
    <property type="term" value="P:alcohol metabolic process"/>
    <property type="evidence" value="ECO:0000250"/>
    <property type="project" value="UniProtKB"/>
</dbReference>
<dbReference type="GO" id="GO:0009836">
    <property type="term" value="P:fruit ripening, climacteric"/>
    <property type="evidence" value="ECO:0000270"/>
    <property type="project" value="UniProtKB"/>
</dbReference>
<dbReference type="Gene3D" id="3.30.559.10">
    <property type="entry name" value="Chloramphenicol acetyltransferase-like domain"/>
    <property type="match status" value="2"/>
</dbReference>
<dbReference type="InterPro" id="IPR023213">
    <property type="entry name" value="CAT-like_dom_sf"/>
</dbReference>
<dbReference type="InterPro" id="IPR050898">
    <property type="entry name" value="Plant_acyltransferase"/>
</dbReference>
<dbReference type="PANTHER" id="PTHR31147">
    <property type="entry name" value="ACYL TRANSFERASE 4"/>
    <property type="match status" value="1"/>
</dbReference>
<dbReference type="PANTHER" id="PTHR31147:SF66">
    <property type="entry name" value="OS05G0315700 PROTEIN"/>
    <property type="match status" value="1"/>
</dbReference>
<dbReference type="Pfam" id="PF02458">
    <property type="entry name" value="Transferase"/>
    <property type="match status" value="1"/>
</dbReference>
<accession>A0A498KE69</accession>
<accession>V9P9M2</accession>
<gene>
    <name evidence="4" type="primary">AAT1RGC</name>
    <name evidence="7" type="ORF">DVH24_017673</name>
</gene>
<feature type="chain" id="PRO_0000451710" description="Alcohol acyl transferase 1 allele RGc">
    <location>
        <begin position="1"/>
        <end position="459"/>
    </location>
</feature>
<feature type="active site" description="Proton acceptor" evidence="2">
    <location>
        <position position="164"/>
    </location>
</feature>
<feature type="active site" description="Proton acceptor" evidence="2">
    <location>
        <position position="385"/>
    </location>
</feature>
<feature type="sequence variant" description="In strain: cv. Royal Gala." evidence="5">
    <original>R</original>
    <variation>G</variation>
    <location>
        <position position="307"/>
    </location>
</feature>
<feature type="sequence variant" description="In strain: cv. Royal Gala." evidence="5">
    <original>RIMSMM</original>
    <variation>SQ</variation>
    <location>
        <begin position="454"/>
        <end position="459"/>
    </location>
</feature>
<reference key="1">
    <citation type="journal article" date="2019" name="Nat. Commun.">
        <title>A high-quality apple genome assembly reveals the association of a retrotransposon and red fruit colour.</title>
        <authorList>
            <person name="Zhang L."/>
            <person name="Hu J."/>
            <person name="Han X."/>
            <person name="Li J."/>
            <person name="Gao Y."/>
            <person name="Richards C.M."/>
            <person name="Zhang C."/>
            <person name="Tian Y."/>
            <person name="Liu G."/>
            <person name="Gul H."/>
            <person name="Wang D."/>
            <person name="Tian Y."/>
            <person name="Yang C."/>
            <person name="Meng M."/>
            <person name="Yuan G."/>
            <person name="Kang G."/>
            <person name="Wu Y."/>
            <person name="Wang K."/>
            <person name="Zhang H."/>
            <person name="Wang D."/>
            <person name="Cong P."/>
        </authorList>
    </citation>
    <scope>NUCLEOTIDE SEQUENCE [LARGE SCALE GENOMIC DNA]</scope>
    <source>
        <strain>cv. HFTH1</strain>
        <tissue>Leaf</tissue>
    </source>
</reference>
<reference key="2">
    <citation type="journal article" date="2014" name="Plant J.">
        <title>The AAT1 locus is critical for the biosynthesis of esters contributing to 'ripe apple' flavour in 'Royal Gala' and 'Granny Smith' apples.</title>
        <authorList>
            <person name="Souleyre E.J.F."/>
            <person name="Chagne D."/>
            <person name="Chen X."/>
            <person name="Tomes S."/>
            <person name="Turner R.M."/>
            <person name="Wang M.Y."/>
            <person name="Maddumage R."/>
            <person name="Hunt M.B."/>
            <person name="Winz R.A."/>
            <person name="Wiedow C."/>
            <person name="Hamiaux C."/>
            <person name="Gardiner S.E."/>
            <person name="Rowan D.D."/>
            <person name="Atkinson R.G."/>
        </authorList>
    </citation>
    <scope>NUCLEOTIDE SEQUENCE [GENOMIC DNA] OF 38-459</scope>
    <scope>TISSUE SPECIFICITY</scope>
    <scope>DEVELOPMENTAL STAGE</scope>
    <scope>GENE FAMILY</scope>
    <scope>NOMENCLATURE</scope>
    <source>
        <strain>cv. Royal Gala</strain>
    </source>
</reference>
<name>ATRGC_MALDO</name>
<organism>
    <name type="scientific">Malus domestica</name>
    <name type="common">Apple</name>
    <name type="synonym">Pyrus malus</name>
    <dbReference type="NCBI Taxonomy" id="3750"/>
    <lineage>
        <taxon>Eukaryota</taxon>
        <taxon>Viridiplantae</taxon>
        <taxon>Streptophyta</taxon>
        <taxon>Embryophyta</taxon>
        <taxon>Tracheophyta</taxon>
        <taxon>Spermatophyta</taxon>
        <taxon>Magnoliopsida</taxon>
        <taxon>eudicotyledons</taxon>
        <taxon>Gunneridae</taxon>
        <taxon>Pentapetalae</taxon>
        <taxon>rosids</taxon>
        <taxon>fabids</taxon>
        <taxon>Rosales</taxon>
        <taxon>Rosaceae</taxon>
        <taxon>Amygdaloideae</taxon>
        <taxon>Maleae</taxon>
        <taxon>Malus</taxon>
    </lineage>
</organism>
<keyword id="KW-1185">Reference proteome</keyword>
<keyword id="KW-0808">Transferase</keyword>
<protein>
    <recommendedName>
        <fullName evidence="4">Alcohol acyl transferase 1 allele RGc</fullName>
        <shortName evidence="4">AAT1-RGc</shortName>
        <ecNumber evidence="1">2.3.1.-</ecNumber>
    </recommendedName>
</protein>